<proteinExistence type="evidence at transcript level"/>
<accession>Q01177</accession>
<accession>Q5BKB6</accession>
<accession>Q9R0W3</accession>
<organism>
    <name type="scientific">Rattus norvegicus</name>
    <name type="common">Rat</name>
    <dbReference type="NCBI Taxonomy" id="10116"/>
    <lineage>
        <taxon>Eukaryota</taxon>
        <taxon>Metazoa</taxon>
        <taxon>Chordata</taxon>
        <taxon>Craniata</taxon>
        <taxon>Vertebrata</taxon>
        <taxon>Euteleostomi</taxon>
        <taxon>Mammalia</taxon>
        <taxon>Eutheria</taxon>
        <taxon>Euarchontoglires</taxon>
        <taxon>Glires</taxon>
        <taxon>Rodentia</taxon>
        <taxon>Myomorpha</taxon>
        <taxon>Muroidea</taxon>
        <taxon>Muridae</taxon>
        <taxon>Murinae</taxon>
        <taxon>Rattus</taxon>
    </lineage>
</organism>
<keyword id="KW-0094">Blood coagulation</keyword>
<keyword id="KW-0165">Cleavage on pair of basic residues</keyword>
<keyword id="KW-1015">Disulfide bond</keyword>
<keyword id="KW-0280">Fibrinolysis</keyword>
<keyword id="KW-0356">Hemostasis</keyword>
<keyword id="KW-0378">Hydrolase</keyword>
<keyword id="KW-0420">Kringle</keyword>
<keyword id="KW-0597">Phosphoprotein</keyword>
<keyword id="KW-0645">Protease</keyword>
<keyword id="KW-1185">Reference proteome</keyword>
<keyword id="KW-0677">Repeat</keyword>
<keyword id="KW-0964">Secreted</keyword>
<keyword id="KW-0720">Serine protease</keyword>
<keyword id="KW-0732">Signal</keyword>
<keyword id="KW-0797">Tissue remodeling</keyword>
<keyword id="KW-0865">Zymogen</keyword>
<sequence>MDHKEIILLFLLFLKPGQGDSLDGYVSTQGASLHSLTKKQLAAGSIADCLAKCEGETDFICRSFQYHSKEQQCVIMAENSKTSSIIRMRDVILFEKRVYLSECKTGIGKGYRGTMSKTKTGVTCQKWSDTSPHVPKYSPSTHPSEGLEENYCRNPDNDEQGPWCYTTDPDQRYEYCNIPECEEECMYCSGEKYEGKISKTMSGLDCQSWDSQSPHAHGYIPAKFPSKNLKMNYCRNPDGEPRPWCFTTDPNKRWEYCDIPRCTTPPPPPGPTYQCLKGRGENYRGTVSVTASGKTCQRWSEQTPHRHNRTPENFPCKNLEENYCRNPDGETAPWCYTTDSQLRWEYCEIPSCGSSVSPDQSDSSVLPEQTPVVQECYQGNGKSYRGTSSTTNTGKKCQSWVSMTPHSHSKTPANFPDAGLEMNYCRNPDNDQRGPWCFTTDPSVRWEYCNLKRCSETGGGVAESAIVPQVPSAPGTSETDCMYGNGKEYRGKTAVTAAGTPCQEWAAQEPHSHRIFTPQTNPRAGLEKNYCRNPDGDVNGPWCYTMNPRKLYDYCNIPLCASLSSFECGKPQVEPKKCPGRVVGGCVANPHSWPWQISLRTRFSGQHFCGGTLISPEWVLTAAHCLEKSSRPEFYKVILGAHEERILGSDVQQIAVTKLVLEPNDADIALLKLSRPATITDNVIPACLPSPNYVVADRTLCYITGWGETKGTPGAGRLKEAQLPVIENKVCNRAEYLNNRVKSTELCAGHLAGGIDSCQGDSGGPLVCFEKDKYILQGVTSWGLGCARPNKPGVYVRVSRYVNWIEREMRND</sequence>
<protein>
    <recommendedName>
        <fullName>Plasminogen</fullName>
        <ecNumber>3.4.21.7</ecNumber>
    </recommendedName>
    <component>
        <recommendedName>
            <fullName>Plasmin heavy chain A</fullName>
        </recommendedName>
    </component>
    <component>
        <recommendedName>
            <fullName>Activation peptide</fullName>
        </recommendedName>
    </component>
    <component>
        <recommendedName>
            <fullName>Angiostatin</fullName>
        </recommendedName>
    </component>
    <component>
        <recommendedName>
            <fullName>Plasmin heavy chain A, short form</fullName>
        </recommendedName>
    </component>
    <component>
        <recommendedName>
            <fullName>Plasmin light chain B</fullName>
        </recommendedName>
    </component>
</protein>
<gene>
    <name type="primary">Plg</name>
</gene>
<name>PLMN_RAT</name>
<feature type="signal peptide" evidence="1">
    <location>
        <begin position="1"/>
        <end position="19"/>
    </location>
</feature>
<feature type="chain" id="PRO_0000028079" description="Plasminogen">
    <location>
        <begin position="20"/>
        <end position="812"/>
    </location>
</feature>
<feature type="chain" id="PRO_0000028080" description="Plasmin heavy chain A">
    <location>
        <begin position="20"/>
        <end position="581"/>
    </location>
</feature>
<feature type="peptide" id="PRO_0000028081" description="Activation peptide" evidence="1">
    <location>
        <begin position="20"/>
        <end position="97"/>
    </location>
</feature>
<feature type="chain" id="PRO_0000028082" description="Plasmin heavy chain A, short form">
    <location>
        <begin position="98"/>
        <end position="581"/>
    </location>
</feature>
<feature type="chain" id="PRO_0000028083" description="Angiostatin">
    <location>
        <begin position="98"/>
        <end position="436" status="uncertain"/>
    </location>
</feature>
<feature type="chain" id="PRO_0000028084" description="Plasmin light chain B">
    <location>
        <begin position="582"/>
        <end position="812"/>
    </location>
</feature>
<feature type="domain" description="PAN" evidence="5">
    <location>
        <begin position="20"/>
        <end position="98"/>
    </location>
</feature>
<feature type="domain" description="Kringle 1" evidence="3">
    <location>
        <begin position="102"/>
        <end position="181"/>
    </location>
</feature>
<feature type="domain" description="Kringle 2" evidence="3">
    <location>
        <begin position="184"/>
        <end position="262"/>
    </location>
</feature>
<feature type="domain" description="Kringle 3" evidence="3">
    <location>
        <begin position="274"/>
        <end position="352"/>
    </location>
</feature>
<feature type="domain" description="Kringle 4" evidence="3">
    <location>
        <begin position="375"/>
        <end position="454"/>
    </location>
</feature>
<feature type="domain" description="Kringle 5" evidence="3">
    <location>
        <begin position="480"/>
        <end position="560"/>
    </location>
</feature>
<feature type="domain" description="Peptidase S1" evidence="4">
    <location>
        <begin position="582"/>
        <end position="810"/>
    </location>
</feature>
<feature type="active site" description="Charge relay system" evidence="1">
    <location>
        <position position="624"/>
    </location>
</feature>
<feature type="active site" description="Charge relay system" evidence="1">
    <location>
        <position position="667"/>
    </location>
</feature>
<feature type="active site" description="Charge relay system" evidence="1">
    <location>
        <position position="762"/>
    </location>
</feature>
<feature type="modified residue" description="Phosphoserine" evidence="2">
    <location>
        <position position="598"/>
    </location>
</feature>
<feature type="modified residue" description="Phosphoserine" evidence="2">
    <location>
        <position position="690"/>
    </location>
</feature>
<feature type="disulfide bond" evidence="1">
    <location>
        <begin position="49"/>
        <end position="73"/>
    </location>
</feature>
<feature type="disulfide bond" evidence="1">
    <location>
        <begin position="53"/>
        <end position="61"/>
    </location>
</feature>
<feature type="disulfide bond" evidence="1">
    <location>
        <begin position="103"/>
        <end position="181"/>
    </location>
</feature>
<feature type="disulfide bond" evidence="1">
    <location>
        <begin position="124"/>
        <end position="164"/>
    </location>
</feature>
<feature type="disulfide bond" evidence="1">
    <location>
        <begin position="152"/>
        <end position="176"/>
    </location>
</feature>
<feature type="disulfide bond" evidence="1">
    <location>
        <begin position="185"/>
        <end position="262"/>
    </location>
</feature>
<feature type="disulfide bond" evidence="1">
    <location>
        <begin position="188"/>
        <end position="316"/>
    </location>
</feature>
<feature type="disulfide bond" evidence="1">
    <location>
        <begin position="206"/>
        <end position="245"/>
    </location>
</feature>
<feature type="disulfide bond" evidence="1">
    <location>
        <begin position="234"/>
        <end position="257"/>
    </location>
</feature>
<feature type="disulfide bond" evidence="1">
    <location>
        <begin position="275"/>
        <end position="352"/>
    </location>
</feature>
<feature type="disulfide bond" evidence="1">
    <location>
        <begin position="296"/>
        <end position="335"/>
    </location>
</feature>
<feature type="disulfide bond" evidence="1">
    <location>
        <begin position="324"/>
        <end position="347"/>
    </location>
</feature>
<feature type="disulfide bond" evidence="1">
    <location>
        <begin position="376"/>
        <end position="454"/>
    </location>
</feature>
<feature type="disulfide bond" evidence="1">
    <location>
        <begin position="397"/>
        <end position="437"/>
    </location>
</feature>
<feature type="disulfide bond" evidence="1">
    <location>
        <begin position="425"/>
        <end position="449"/>
    </location>
</feature>
<feature type="disulfide bond" evidence="1">
    <location>
        <begin position="481"/>
        <end position="560"/>
    </location>
</feature>
<feature type="disulfide bond" evidence="1">
    <location>
        <begin position="502"/>
        <end position="543"/>
    </location>
</feature>
<feature type="disulfide bond" evidence="1">
    <location>
        <begin position="531"/>
        <end position="555"/>
    </location>
</feature>
<feature type="disulfide bond" description="Interchain (between A and B chains)" evidence="1">
    <location>
        <begin position="568"/>
        <end position="687"/>
    </location>
</feature>
<feature type="disulfide bond" description="Interchain (between A and B chains)" evidence="1">
    <location>
        <begin position="578"/>
        <end position="586"/>
    </location>
</feature>
<feature type="disulfide bond" evidence="1">
    <location>
        <begin position="609"/>
        <end position="625"/>
    </location>
</feature>
<feature type="disulfide bond" evidence="1">
    <location>
        <begin position="701"/>
        <end position="768"/>
    </location>
</feature>
<feature type="disulfide bond" evidence="1">
    <location>
        <begin position="731"/>
        <end position="747"/>
    </location>
</feature>
<feature type="disulfide bond" evidence="1">
    <location>
        <begin position="758"/>
        <end position="786"/>
    </location>
</feature>
<feature type="sequence conflict" description="In Ref. 3; AAA41884." evidence="6" ref="3">
    <original>A</original>
    <variation>S</variation>
    <location>
        <position position="418"/>
    </location>
</feature>
<comment type="function">
    <text evidence="1">Plasmin dissolves the fibrin of blood clots and acts as a proteolytic factor in a variety of other processes including embryonic development, tissue remodeling, tumor invasion, and inflammation. In ovulation, weakens the walls of the Graafian follicle. It activates the urokinase-type plasminogen activator, collagenases and several complement zymogens, such as C1, C4 and C5. Cleavage of fibronectin and laminin leads to cell detachment and apoptosis. Also cleaves fibrin, thrombospondin and von Willebrand factor. Its role in tissue remodeling and tumor invasion may be modulated by CSPG4. Binds to cells (By similarity).</text>
</comment>
<comment type="function">
    <text evidence="1">Angiostatin is an angiogenesis inhibitor that blocks neovascularization and growth of experimental primary and metastatic tumors in vivo.</text>
</comment>
<comment type="catalytic activity">
    <reaction>
        <text>Preferential cleavage: Lys-|-Xaa &gt; Arg-|-Xaa, higher selectivity than trypsin. Converts fibrin into soluble products.</text>
        <dbReference type="EC" id="3.4.21.7"/>
    </reaction>
</comment>
<comment type="activity regulation">
    <text>Converted into plasmin by plasminogen activators, both plasminogen and its activator being bound to fibrin. Cannot be activated with streptokinase.</text>
</comment>
<comment type="subunit">
    <text evidence="2">Interacts (both mature PLG and the angiostatin peptide) with AMOT and CSPG4. Interacts (via the Kringle domains) with HRG; the interaction tethers PLG to the cell surface and enhances its activation. Interacts (via Kringle 4 domain) with ADA; the interaction stimulates PLG activation when in complex with DPP4. Angiostatin: Interacts with ATP5F1A; the interaction inhibits most of the angiogenic effects of angiostatin.</text>
</comment>
<comment type="subcellular location">
    <subcellularLocation>
        <location evidence="1">Secreted</location>
    </subcellularLocation>
    <text evidence="1">Locates to the cell surface where it is proteolytically cleaved to produce the active plasmin. Interaction with HRG tethers it to the cell surface (By similarity).</text>
</comment>
<comment type="domain">
    <text evidence="1">Kringle domains mediate interaction with CSPG4.</text>
</comment>
<comment type="PTM">
    <text evidence="1">In the presence of the inhibitor, the activation involves only cleavage after Arg-581, yielding two chains held together by two disulfide bonds. In the absence of the inhibitor, the activation involves additionally the removal of the activation peptide (By similarity).</text>
</comment>
<comment type="miscellaneous">
    <text>Plasmin is inactivated by alpha-2-antiplasmin immediately after dissociation from the clot.</text>
</comment>
<comment type="miscellaneous">
    <text evidence="1">In the presence of the inhibitor, the activation involves only cleavage after Arg-581, resulting in 2 chains held together by 2 disulfide bonds. Without the inhibitor, the activation also involves removal of the activation peptide (By similarity).</text>
</comment>
<comment type="similarity">
    <text evidence="4">Belongs to the peptidase S1 family. Plasminogen subfamily.</text>
</comment>
<evidence type="ECO:0000250" key="1"/>
<evidence type="ECO:0000250" key="2">
    <source>
        <dbReference type="UniProtKB" id="P00747"/>
    </source>
</evidence>
<evidence type="ECO:0000255" key="3">
    <source>
        <dbReference type="PROSITE-ProRule" id="PRU00121"/>
    </source>
</evidence>
<evidence type="ECO:0000255" key="4">
    <source>
        <dbReference type="PROSITE-ProRule" id="PRU00274"/>
    </source>
</evidence>
<evidence type="ECO:0000255" key="5">
    <source>
        <dbReference type="PROSITE-ProRule" id="PRU00315"/>
    </source>
</evidence>
<evidence type="ECO:0000305" key="6"/>
<dbReference type="EC" id="3.4.21.7"/>
<dbReference type="EMBL" id="AJ242649">
    <property type="protein sequence ID" value="CAB46014.1"/>
    <property type="molecule type" value="mRNA"/>
</dbReference>
<dbReference type="EMBL" id="BC091135">
    <property type="protein sequence ID" value="AAH91135.1"/>
    <property type="molecule type" value="mRNA"/>
</dbReference>
<dbReference type="EMBL" id="M62832">
    <property type="protein sequence ID" value="AAA41884.1"/>
    <property type="molecule type" value="mRNA"/>
</dbReference>
<dbReference type="PIR" id="A40522">
    <property type="entry name" value="A40522"/>
</dbReference>
<dbReference type="RefSeq" id="NP_445943.1">
    <property type="nucleotide sequence ID" value="NM_053491.2"/>
</dbReference>
<dbReference type="SMR" id="Q01177"/>
<dbReference type="BioGRID" id="250057">
    <property type="interactions" value="1"/>
</dbReference>
<dbReference type="FunCoup" id="Q01177">
    <property type="interactions" value="101"/>
</dbReference>
<dbReference type="IntAct" id="Q01177">
    <property type="interactions" value="1"/>
</dbReference>
<dbReference type="STRING" id="10116.ENSRNOP00000023370"/>
<dbReference type="BindingDB" id="Q01177"/>
<dbReference type="ChEMBL" id="CHEMBL3204"/>
<dbReference type="DrugCentral" id="Q01177"/>
<dbReference type="MEROPS" id="S01.233"/>
<dbReference type="PhosphoSitePlus" id="Q01177"/>
<dbReference type="SwissPalm" id="Q01177"/>
<dbReference type="PaxDb" id="10116-ENSRNOP00000023370"/>
<dbReference type="Ensembl" id="ENSRNOT00000023368.6">
    <property type="protein sequence ID" value="ENSRNOP00000023370.3"/>
    <property type="gene ID" value="ENSRNOG00000017223.8"/>
</dbReference>
<dbReference type="GeneID" id="85253"/>
<dbReference type="KEGG" id="rno:85253"/>
<dbReference type="AGR" id="RGD:619893"/>
<dbReference type="CTD" id="5340"/>
<dbReference type="RGD" id="619893">
    <property type="gene designation" value="Plg"/>
</dbReference>
<dbReference type="eggNOG" id="ENOG502QVNP">
    <property type="taxonomic scope" value="Eukaryota"/>
</dbReference>
<dbReference type="GeneTree" id="ENSGT00940000155208"/>
<dbReference type="HOGENOM" id="CLU_017565_0_0_1"/>
<dbReference type="InParanoid" id="Q01177"/>
<dbReference type="OrthoDB" id="23870at9989"/>
<dbReference type="PhylomeDB" id="Q01177"/>
<dbReference type="TreeFam" id="TF329901"/>
<dbReference type="Reactome" id="R-RNO-114608">
    <property type="pathway name" value="Platelet degranulation"/>
</dbReference>
<dbReference type="Reactome" id="R-RNO-1592389">
    <property type="pathway name" value="Activation of Matrix Metalloproteinases"/>
</dbReference>
<dbReference type="Reactome" id="R-RNO-186797">
    <property type="pathway name" value="Signaling by PDGF"/>
</dbReference>
<dbReference type="Reactome" id="R-RNO-381426">
    <property type="pathway name" value="Regulation of Insulin-like Growth Factor (IGF) transport and uptake by Insulin-like Growth Factor Binding Proteins (IGFBPs)"/>
</dbReference>
<dbReference type="Reactome" id="R-RNO-75205">
    <property type="pathway name" value="Dissolution of Fibrin Clot"/>
</dbReference>
<dbReference type="PRO" id="PR:Q01177"/>
<dbReference type="Proteomes" id="UP000002494">
    <property type="component" value="Chromosome 1"/>
</dbReference>
<dbReference type="Bgee" id="ENSRNOG00000017223">
    <property type="expression patterns" value="Expressed in liver and 16 other cell types or tissues"/>
</dbReference>
<dbReference type="ExpressionAtlas" id="Q01177">
    <property type="expression patterns" value="baseline and differential"/>
</dbReference>
<dbReference type="GO" id="GO:0009986">
    <property type="term" value="C:cell surface"/>
    <property type="evidence" value="ECO:0000266"/>
    <property type="project" value="RGD"/>
</dbReference>
<dbReference type="GO" id="GO:0009897">
    <property type="term" value="C:external side of plasma membrane"/>
    <property type="evidence" value="ECO:0000266"/>
    <property type="project" value="RGD"/>
</dbReference>
<dbReference type="GO" id="GO:0005615">
    <property type="term" value="C:extracellular space"/>
    <property type="evidence" value="ECO:0000314"/>
    <property type="project" value="CAFA"/>
</dbReference>
<dbReference type="GO" id="GO:0098978">
    <property type="term" value="C:glutamatergic synapse"/>
    <property type="evidence" value="ECO:0000266"/>
    <property type="project" value="RGD"/>
</dbReference>
<dbReference type="GO" id="GO:0098685">
    <property type="term" value="C:Schaffer collateral - CA1 synapse"/>
    <property type="evidence" value="ECO:0000266"/>
    <property type="project" value="RGD"/>
</dbReference>
<dbReference type="GO" id="GO:0034185">
    <property type="term" value="F:apolipoprotein binding"/>
    <property type="evidence" value="ECO:0000266"/>
    <property type="project" value="RGD"/>
</dbReference>
<dbReference type="GO" id="GO:0004175">
    <property type="term" value="F:endopeptidase activity"/>
    <property type="evidence" value="ECO:0000314"/>
    <property type="project" value="RGD"/>
</dbReference>
<dbReference type="GO" id="GO:0019899">
    <property type="term" value="F:enzyme binding"/>
    <property type="evidence" value="ECO:0000353"/>
    <property type="project" value="CAFA"/>
</dbReference>
<dbReference type="GO" id="GO:0019900">
    <property type="term" value="F:kinase binding"/>
    <property type="evidence" value="ECO:0000266"/>
    <property type="project" value="RGD"/>
</dbReference>
<dbReference type="GO" id="GO:0002020">
    <property type="term" value="F:protease binding"/>
    <property type="evidence" value="ECO:0000266"/>
    <property type="project" value="RGD"/>
</dbReference>
<dbReference type="GO" id="GO:1990405">
    <property type="term" value="F:protein antigen binding"/>
    <property type="evidence" value="ECO:0000266"/>
    <property type="project" value="RGD"/>
</dbReference>
<dbReference type="GO" id="GO:0019904">
    <property type="term" value="F:protein domain specific binding"/>
    <property type="evidence" value="ECO:0000266"/>
    <property type="project" value="RGD"/>
</dbReference>
<dbReference type="GO" id="GO:0051087">
    <property type="term" value="F:protein-folding chaperone binding"/>
    <property type="evidence" value="ECO:0000266"/>
    <property type="project" value="RGD"/>
</dbReference>
<dbReference type="GO" id="GO:0004252">
    <property type="term" value="F:serine-type endopeptidase activity"/>
    <property type="evidence" value="ECO:0000266"/>
    <property type="project" value="RGD"/>
</dbReference>
<dbReference type="GO" id="GO:0005102">
    <property type="term" value="F:signaling receptor binding"/>
    <property type="evidence" value="ECO:0000266"/>
    <property type="project" value="RGD"/>
</dbReference>
<dbReference type="GO" id="GO:0007596">
    <property type="term" value="P:blood coagulation"/>
    <property type="evidence" value="ECO:0000266"/>
    <property type="project" value="RGD"/>
</dbReference>
<dbReference type="GO" id="GO:0022617">
    <property type="term" value="P:extracellular matrix disassembly"/>
    <property type="evidence" value="ECO:0000266"/>
    <property type="project" value="RGD"/>
</dbReference>
<dbReference type="GO" id="GO:0042730">
    <property type="term" value="P:fibrinolysis"/>
    <property type="evidence" value="ECO:0000266"/>
    <property type="project" value="RGD"/>
</dbReference>
<dbReference type="GO" id="GO:0060716">
    <property type="term" value="P:labyrinthine layer blood vessel development"/>
    <property type="evidence" value="ECO:0000266"/>
    <property type="project" value="RGD"/>
</dbReference>
<dbReference type="GO" id="GO:0071674">
    <property type="term" value="P:mononuclear cell migration"/>
    <property type="evidence" value="ECO:0000266"/>
    <property type="project" value="RGD"/>
</dbReference>
<dbReference type="GO" id="GO:0046716">
    <property type="term" value="P:muscle cell cellular homeostasis"/>
    <property type="evidence" value="ECO:0000266"/>
    <property type="project" value="RGD"/>
</dbReference>
<dbReference type="GO" id="GO:0045445">
    <property type="term" value="P:myoblast differentiation"/>
    <property type="evidence" value="ECO:0000266"/>
    <property type="project" value="RGD"/>
</dbReference>
<dbReference type="GO" id="GO:0010812">
    <property type="term" value="P:negative regulation of cell-substrate adhesion"/>
    <property type="evidence" value="ECO:0000266"/>
    <property type="project" value="RGD"/>
</dbReference>
<dbReference type="GO" id="GO:0051918">
    <property type="term" value="P:negative regulation of fibrinolysis"/>
    <property type="evidence" value="ECO:0000266"/>
    <property type="project" value="RGD"/>
</dbReference>
<dbReference type="GO" id="GO:0043536">
    <property type="term" value="P:positive regulation of blood vessel endothelial cell migration"/>
    <property type="evidence" value="ECO:0000266"/>
    <property type="project" value="RGD"/>
</dbReference>
<dbReference type="GO" id="GO:0051919">
    <property type="term" value="P:positive regulation of fibrinolysis"/>
    <property type="evidence" value="ECO:0000266"/>
    <property type="project" value="RGD"/>
</dbReference>
<dbReference type="GO" id="GO:0016485">
    <property type="term" value="P:protein processing"/>
    <property type="evidence" value="ECO:0000266"/>
    <property type="project" value="RGD"/>
</dbReference>
<dbReference type="GO" id="GO:0006508">
    <property type="term" value="P:proteolysis"/>
    <property type="evidence" value="ECO:0000266"/>
    <property type="project" value="RGD"/>
</dbReference>
<dbReference type="GO" id="GO:0051603">
    <property type="term" value="P:proteolysis involved in protein catabolic process"/>
    <property type="evidence" value="ECO:0000314"/>
    <property type="project" value="RGD"/>
</dbReference>
<dbReference type="GO" id="GO:0042246">
    <property type="term" value="P:tissue regeneration"/>
    <property type="evidence" value="ECO:0000266"/>
    <property type="project" value="RGD"/>
</dbReference>
<dbReference type="GO" id="GO:0048771">
    <property type="term" value="P:tissue remodeling"/>
    <property type="evidence" value="ECO:0007669"/>
    <property type="project" value="UniProtKB-KW"/>
</dbReference>
<dbReference type="GO" id="GO:0099183">
    <property type="term" value="P:trans-synaptic signaling by BDNF, modulating synaptic transmission"/>
    <property type="evidence" value="ECO:0000266"/>
    <property type="project" value="RGD"/>
</dbReference>
<dbReference type="GO" id="GO:0060707">
    <property type="term" value="P:trophoblast giant cell differentiation"/>
    <property type="evidence" value="ECO:0000266"/>
    <property type="project" value="RGD"/>
</dbReference>
<dbReference type="CDD" id="cd00108">
    <property type="entry name" value="KR"/>
    <property type="match status" value="5"/>
</dbReference>
<dbReference type="CDD" id="cd01099">
    <property type="entry name" value="PAN_AP_HGF"/>
    <property type="match status" value="1"/>
</dbReference>
<dbReference type="CDD" id="cd00190">
    <property type="entry name" value="Tryp_SPc"/>
    <property type="match status" value="1"/>
</dbReference>
<dbReference type="FunFam" id="2.40.20.10:FF:000005">
    <property type="entry name" value="Plasminogen"/>
    <property type="match status" value="1"/>
</dbReference>
<dbReference type="FunFam" id="2.40.20.10:FF:000011">
    <property type="entry name" value="Plasminogen"/>
    <property type="match status" value="1"/>
</dbReference>
<dbReference type="FunFam" id="2.40.20.10:FF:000013">
    <property type="entry name" value="Plasminogen"/>
    <property type="match status" value="1"/>
</dbReference>
<dbReference type="FunFam" id="2.40.20.10:FF:000014">
    <property type="entry name" value="Plasminogen"/>
    <property type="match status" value="1"/>
</dbReference>
<dbReference type="FunFam" id="3.50.4.10:FF:000011">
    <property type="entry name" value="Plasminogen"/>
    <property type="match status" value="1"/>
</dbReference>
<dbReference type="FunFam" id="2.40.10.10:FF:000003">
    <property type="entry name" value="Transmembrane serine protease 3"/>
    <property type="match status" value="1"/>
</dbReference>
<dbReference type="Gene3D" id="3.50.4.10">
    <property type="entry name" value="Hepatocyte Growth Factor"/>
    <property type="match status" value="1"/>
</dbReference>
<dbReference type="Gene3D" id="2.40.20.10">
    <property type="entry name" value="Plasminogen Kringle 4"/>
    <property type="match status" value="4"/>
</dbReference>
<dbReference type="Gene3D" id="2.40.10.10">
    <property type="entry name" value="Trypsin-like serine proteases"/>
    <property type="match status" value="1"/>
</dbReference>
<dbReference type="InterPro" id="IPR000001">
    <property type="entry name" value="Kringle"/>
</dbReference>
<dbReference type="InterPro" id="IPR013806">
    <property type="entry name" value="Kringle-like"/>
</dbReference>
<dbReference type="InterPro" id="IPR018056">
    <property type="entry name" value="Kringle_CS"/>
</dbReference>
<dbReference type="InterPro" id="IPR038178">
    <property type="entry name" value="Kringle_sf"/>
</dbReference>
<dbReference type="InterPro" id="IPR003609">
    <property type="entry name" value="Pan_app"/>
</dbReference>
<dbReference type="InterPro" id="IPR023317">
    <property type="entry name" value="Pept_S1A_plasmin"/>
</dbReference>
<dbReference type="InterPro" id="IPR009003">
    <property type="entry name" value="Peptidase_S1_PA"/>
</dbReference>
<dbReference type="InterPro" id="IPR043504">
    <property type="entry name" value="Peptidase_S1_PA_chymotrypsin"/>
</dbReference>
<dbReference type="InterPro" id="IPR001314">
    <property type="entry name" value="Peptidase_S1A"/>
</dbReference>
<dbReference type="InterPro" id="IPR050759">
    <property type="entry name" value="Serine_protease_kringle"/>
</dbReference>
<dbReference type="InterPro" id="IPR001254">
    <property type="entry name" value="Trypsin_dom"/>
</dbReference>
<dbReference type="InterPro" id="IPR018114">
    <property type="entry name" value="TRYPSIN_HIS"/>
</dbReference>
<dbReference type="InterPro" id="IPR033116">
    <property type="entry name" value="TRYPSIN_SER"/>
</dbReference>
<dbReference type="PANTHER" id="PTHR24261:SF13">
    <property type="entry name" value="PLASMINOGEN"/>
    <property type="match status" value="1"/>
</dbReference>
<dbReference type="PANTHER" id="PTHR24261">
    <property type="entry name" value="PLASMINOGEN-RELATED"/>
    <property type="match status" value="1"/>
</dbReference>
<dbReference type="Pfam" id="PF00051">
    <property type="entry name" value="Kringle"/>
    <property type="match status" value="5"/>
</dbReference>
<dbReference type="Pfam" id="PF00024">
    <property type="entry name" value="PAN_1"/>
    <property type="match status" value="1"/>
</dbReference>
<dbReference type="Pfam" id="PF00089">
    <property type="entry name" value="Trypsin"/>
    <property type="match status" value="1"/>
</dbReference>
<dbReference type="PIRSF" id="PIRSF001150">
    <property type="entry name" value="Plasmin"/>
    <property type="match status" value="1"/>
</dbReference>
<dbReference type="PRINTS" id="PR00722">
    <property type="entry name" value="CHYMOTRYPSIN"/>
</dbReference>
<dbReference type="PRINTS" id="PR00018">
    <property type="entry name" value="KRINGLE"/>
</dbReference>
<dbReference type="SMART" id="SM00130">
    <property type="entry name" value="KR"/>
    <property type="match status" value="5"/>
</dbReference>
<dbReference type="SMART" id="SM00473">
    <property type="entry name" value="PAN_AP"/>
    <property type="match status" value="1"/>
</dbReference>
<dbReference type="SMART" id="SM00020">
    <property type="entry name" value="Tryp_SPc"/>
    <property type="match status" value="1"/>
</dbReference>
<dbReference type="SUPFAM" id="SSF57414">
    <property type="entry name" value="Hairpin loop containing domain-like"/>
    <property type="match status" value="1"/>
</dbReference>
<dbReference type="SUPFAM" id="SSF57440">
    <property type="entry name" value="Kringle-like"/>
    <property type="match status" value="5"/>
</dbReference>
<dbReference type="SUPFAM" id="SSF50494">
    <property type="entry name" value="Trypsin-like serine proteases"/>
    <property type="match status" value="1"/>
</dbReference>
<dbReference type="PROSITE" id="PS00021">
    <property type="entry name" value="KRINGLE_1"/>
    <property type="match status" value="5"/>
</dbReference>
<dbReference type="PROSITE" id="PS50070">
    <property type="entry name" value="KRINGLE_2"/>
    <property type="match status" value="5"/>
</dbReference>
<dbReference type="PROSITE" id="PS50948">
    <property type="entry name" value="PAN"/>
    <property type="match status" value="1"/>
</dbReference>
<dbReference type="PROSITE" id="PS50240">
    <property type="entry name" value="TRYPSIN_DOM"/>
    <property type="match status" value="1"/>
</dbReference>
<dbReference type="PROSITE" id="PS00134">
    <property type="entry name" value="TRYPSIN_HIS"/>
    <property type="match status" value="1"/>
</dbReference>
<dbReference type="PROSITE" id="PS00135">
    <property type="entry name" value="TRYPSIN_SER"/>
    <property type="match status" value="1"/>
</dbReference>
<reference key="1">
    <citation type="submission" date="1999-05" db="EMBL/GenBank/DDBJ databases">
        <title>Rat plasminogen: cDNA and gene structure.</title>
        <authorList>
            <person name="Bangert K."/>
            <person name="Johnsen A.H."/>
            <person name="Thorsen S."/>
        </authorList>
    </citation>
    <scope>NUCLEOTIDE SEQUENCE [MRNA]</scope>
    <source>
        <tissue>Liver</tissue>
    </source>
</reference>
<reference key="2">
    <citation type="journal article" date="2004" name="Genome Res.">
        <title>The status, quality, and expansion of the NIH full-length cDNA project: the Mammalian Gene Collection (MGC).</title>
        <authorList>
            <consortium name="The MGC Project Team"/>
        </authorList>
    </citation>
    <scope>NUCLEOTIDE SEQUENCE [LARGE SCALE MRNA]</scope>
    <source>
        <tissue>Liver</tissue>
    </source>
</reference>
<reference key="3">
    <citation type="journal article" date="1991" name="J. Biol. Chem.">
        <title>Identification of the rat Heymann nephritis autoantigen (GP330) as a receptor site for plasminogen.</title>
        <authorList>
            <person name="Kanalas J.J."/>
            <person name="Makker S.P."/>
        </authorList>
    </citation>
    <scope>NUCLEOTIDE SEQUENCE [MRNA] OF 343-511</scope>
    <source>
        <tissue>Liver</tissue>
    </source>
</reference>